<sequence>MMKILISNDDGVNAIGIVALTRSLSQIAETLTVGPDRNCSGASNSLTLTNPLRLNTLDNGFISVSGTPTDCVHLAIRELYQDEPDMVVSGINAGANMGDDTLYSGTVAAAMEGRFLGFPAIAISLVGHEHYETAAHYALKIVKALQDNPVAQDKILNINVPDLPLSEVKGMKITRLGARHRAEGMVRTQDPAGKEIFWLGPPGDEQDASDGTDFHAVANGYVSITPLTVDLTAFEQLKALDNWLANISEK</sequence>
<dbReference type="EC" id="3.1.3.5" evidence="1"/>
<dbReference type="EMBL" id="CP000851">
    <property type="protein sequence ID" value="ABV86517.1"/>
    <property type="molecule type" value="Genomic_DNA"/>
</dbReference>
<dbReference type="RefSeq" id="WP_012154444.1">
    <property type="nucleotide sequence ID" value="NC_009901.1"/>
</dbReference>
<dbReference type="SMR" id="A8H1T0"/>
<dbReference type="STRING" id="398579.Spea_1190"/>
<dbReference type="KEGG" id="spl:Spea_1190"/>
<dbReference type="eggNOG" id="COG0496">
    <property type="taxonomic scope" value="Bacteria"/>
</dbReference>
<dbReference type="HOGENOM" id="CLU_045192_1_2_6"/>
<dbReference type="OrthoDB" id="9780815at2"/>
<dbReference type="Proteomes" id="UP000002608">
    <property type="component" value="Chromosome"/>
</dbReference>
<dbReference type="GO" id="GO:0005737">
    <property type="term" value="C:cytoplasm"/>
    <property type="evidence" value="ECO:0007669"/>
    <property type="project" value="UniProtKB-SubCell"/>
</dbReference>
<dbReference type="GO" id="GO:0008254">
    <property type="term" value="F:3'-nucleotidase activity"/>
    <property type="evidence" value="ECO:0007669"/>
    <property type="project" value="TreeGrafter"/>
</dbReference>
<dbReference type="GO" id="GO:0008253">
    <property type="term" value="F:5'-nucleotidase activity"/>
    <property type="evidence" value="ECO:0007669"/>
    <property type="project" value="UniProtKB-UniRule"/>
</dbReference>
<dbReference type="GO" id="GO:0004309">
    <property type="term" value="F:exopolyphosphatase activity"/>
    <property type="evidence" value="ECO:0007669"/>
    <property type="project" value="TreeGrafter"/>
</dbReference>
<dbReference type="GO" id="GO:0046872">
    <property type="term" value="F:metal ion binding"/>
    <property type="evidence" value="ECO:0007669"/>
    <property type="project" value="UniProtKB-UniRule"/>
</dbReference>
<dbReference type="GO" id="GO:0000166">
    <property type="term" value="F:nucleotide binding"/>
    <property type="evidence" value="ECO:0007669"/>
    <property type="project" value="UniProtKB-KW"/>
</dbReference>
<dbReference type="FunFam" id="3.40.1210.10:FF:000001">
    <property type="entry name" value="5'/3'-nucleotidase SurE"/>
    <property type="match status" value="1"/>
</dbReference>
<dbReference type="Gene3D" id="3.40.1210.10">
    <property type="entry name" value="Survival protein SurE-like phosphatase/nucleotidase"/>
    <property type="match status" value="1"/>
</dbReference>
<dbReference type="HAMAP" id="MF_00060">
    <property type="entry name" value="SurE"/>
    <property type="match status" value="1"/>
</dbReference>
<dbReference type="InterPro" id="IPR030048">
    <property type="entry name" value="SurE"/>
</dbReference>
<dbReference type="InterPro" id="IPR002828">
    <property type="entry name" value="SurE-like_Pase/nucleotidase"/>
</dbReference>
<dbReference type="InterPro" id="IPR036523">
    <property type="entry name" value="SurE-like_sf"/>
</dbReference>
<dbReference type="NCBIfam" id="NF001489">
    <property type="entry name" value="PRK00346.1-3"/>
    <property type="match status" value="1"/>
</dbReference>
<dbReference type="NCBIfam" id="NF001490">
    <property type="entry name" value="PRK00346.1-4"/>
    <property type="match status" value="1"/>
</dbReference>
<dbReference type="NCBIfam" id="TIGR00087">
    <property type="entry name" value="surE"/>
    <property type="match status" value="1"/>
</dbReference>
<dbReference type="PANTHER" id="PTHR30457">
    <property type="entry name" value="5'-NUCLEOTIDASE SURE"/>
    <property type="match status" value="1"/>
</dbReference>
<dbReference type="PANTHER" id="PTHR30457:SF12">
    <property type="entry name" value="5'_3'-NUCLEOTIDASE SURE"/>
    <property type="match status" value="1"/>
</dbReference>
<dbReference type="Pfam" id="PF01975">
    <property type="entry name" value="SurE"/>
    <property type="match status" value="1"/>
</dbReference>
<dbReference type="SUPFAM" id="SSF64167">
    <property type="entry name" value="SurE-like"/>
    <property type="match status" value="1"/>
</dbReference>
<accession>A8H1T0</accession>
<keyword id="KW-0963">Cytoplasm</keyword>
<keyword id="KW-0378">Hydrolase</keyword>
<keyword id="KW-0479">Metal-binding</keyword>
<keyword id="KW-0547">Nucleotide-binding</keyword>
<keyword id="KW-1185">Reference proteome</keyword>
<organism>
    <name type="scientific">Shewanella pealeana (strain ATCC 700345 / ANG-SQ1)</name>
    <dbReference type="NCBI Taxonomy" id="398579"/>
    <lineage>
        <taxon>Bacteria</taxon>
        <taxon>Pseudomonadati</taxon>
        <taxon>Pseudomonadota</taxon>
        <taxon>Gammaproteobacteria</taxon>
        <taxon>Alteromonadales</taxon>
        <taxon>Shewanellaceae</taxon>
        <taxon>Shewanella</taxon>
    </lineage>
</organism>
<evidence type="ECO:0000255" key="1">
    <source>
        <dbReference type="HAMAP-Rule" id="MF_00060"/>
    </source>
</evidence>
<reference key="1">
    <citation type="submission" date="2007-10" db="EMBL/GenBank/DDBJ databases">
        <title>Complete sequence of Shewanella pealeana ATCC 700345.</title>
        <authorList>
            <consortium name="US DOE Joint Genome Institute"/>
            <person name="Copeland A."/>
            <person name="Lucas S."/>
            <person name="Lapidus A."/>
            <person name="Barry K."/>
            <person name="Glavina del Rio T."/>
            <person name="Dalin E."/>
            <person name="Tice H."/>
            <person name="Pitluck S."/>
            <person name="Chertkov O."/>
            <person name="Brettin T."/>
            <person name="Bruce D."/>
            <person name="Detter J.C."/>
            <person name="Han C."/>
            <person name="Schmutz J."/>
            <person name="Larimer F."/>
            <person name="Land M."/>
            <person name="Hauser L."/>
            <person name="Kyrpides N."/>
            <person name="Kim E."/>
            <person name="Zhao J.-S.Z."/>
            <person name="Manno D."/>
            <person name="Hawari J."/>
            <person name="Richardson P."/>
        </authorList>
    </citation>
    <scope>NUCLEOTIDE SEQUENCE [LARGE SCALE GENOMIC DNA]</scope>
    <source>
        <strain>ATCC 700345 / ANG-SQ1</strain>
    </source>
</reference>
<proteinExistence type="inferred from homology"/>
<gene>
    <name evidence="1" type="primary">surE</name>
    <name type="ordered locus">Spea_1190</name>
</gene>
<name>SURE_SHEPA</name>
<feature type="chain" id="PRO_0000335276" description="5'-nucleotidase SurE">
    <location>
        <begin position="1"/>
        <end position="250"/>
    </location>
</feature>
<feature type="binding site" evidence="1">
    <location>
        <position position="9"/>
    </location>
    <ligand>
        <name>a divalent metal cation</name>
        <dbReference type="ChEBI" id="CHEBI:60240"/>
    </ligand>
</feature>
<feature type="binding site" evidence="1">
    <location>
        <position position="10"/>
    </location>
    <ligand>
        <name>a divalent metal cation</name>
        <dbReference type="ChEBI" id="CHEBI:60240"/>
    </ligand>
</feature>
<feature type="binding site" evidence="1">
    <location>
        <position position="40"/>
    </location>
    <ligand>
        <name>a divalent metal cation</name>
        <dbReference type="ChEBI" id="CHEBI:60240"/>
    </ligand>
</feature>
<feature type="binding site" evidence="1">
    <location>
        <position position="92"/>
    </location>
    <ligand>
        <name>a divalent metal cation</name>
        <dbReference type="ChEBI" id="CHEBI:60240"/>
    </ligand>
</feature>
<protein>
    <recommendedName>
        <fullName evidence="1">5'-nucleotidase SurE</fullName>
        <ecNumber evidence="1">3.1.3.5</ecNumber>
    </recommendedName>
    <alternativeName>
        <fullName evidence="1">Nucleoside 5'-monophosphate phosphohydrolase</fullName>
    </alternativeName>
</protein>
<comment type="function">
    <text evidence="1">Nucleotidase that shows phosphatase activity on nucleoside 5'-monophosphates.</text>
</comment>
<comment type="catalytic activity">
    <reaction evidence="1">
        <text>a ribonucleoside 5'-phosphate + H2O = a ribonucleoside + phosphate</text>
        <dbReference type="Rhea" id="RHEA:12484"/>
        <dbReference type="ChEBI" id="CHEBI:15377"/>
        <dbReference type="ChEBI" id="CHEBI:18254"/>
        <dbReference type="ChEBI" id="CHEBI:43474"/>
        <dbReference type="ChEBI" id="CHEBI:58043"/>
        <dbReference type="EC" id="3.1.3.5"/>
    </reaction>
</comment>
<comment type="cofactor">
    <cofactor evidence="1">
        <name>a divalent metal cation</name>
        <dbReference type="ChEBI" id="CHEBI:60240"/>
    </cofactor>
    <text evidence="1">Binds 1 divalent metal cation per subunit.</text>
</comment>
<comment type="subcellular location">
    <subcellularLocation>
        <location evidence="1">Cytoplasm</location>
    </subcellularLocation>
</comment>
<comment type="similarity">
    <text evidence="1">Belongs to the SurE nucleotidase family.</text>
</comment>